<comment type="subcellular location">
    <subcellularLocation>
        <location evidence="3">Secreted</location>
    </subcellularLocation>
</comment>
<comment type="similarity">
    <text evidence="3">Belongs to the NPIP family.</text>
</comment>
<evidence type="ECO:0000255" key="1"/>
<evidence type="ECO:0000256" key="2">
    <source>
        <dbReference type="SAM" id="MobiDB-lite"/>
    </source>
</evidence>
<evidence type="ECO:0000305" key="3"/>
<organism>
    <name type="scientific">Homo sapiens</name>
    <name type="common">Human</name>
    <dbReference type="NCBI Taxonomy" id="9606"/>
    <lineage>
        <taxon>Eukaryota</taxon>
        <taxon>Metazoa</taxon>
        <taxon>Chordata</taxon>
        <taxon>Craniata</taxon>
        <taxon>Vertebrata</taxon>
        <taxon>Euteleostomi</taxon>
        <taxon>Mammalia</taxon>
        <taxon>Eutheria</taxon>
        <taxon>Euarchontoglires</taxon>
        <taxon>Primates</taxon>
        <taxon>Haplorrhini</taxon>
        <taxon>Catarrhini</taxon>
        <taxon>Hominidae</taxon>
        <taxon>Homo</taxon>
    </lineage>
</organism>
<gene>
    <name type="primary">NPIPB15</name>
    <name type="synonym">NPIPL2</name>
</gene>
<feature type="signal peptide" evidence="1">
    <location>
        <begin position="1"/>
        <end position="18"/>
    </location>
</feature>
<feature type="chain" id="PRO_0000367122" description="Nuclear pore complex-interacting protein family member B15">
    <location>
        <begin position="19"/>
        <end position="443"/>
    </location>
</feature>
<feature type="region of interest" description="Disordered" evidence="2">
    <location>
        <begin position="242"/>
        <end position="262"/>
    </location>
</feature>
<feature type="region of interest" description="Disordered" evidence="2">
    <location>
        <begin position="330"/>
        <end position="413"/>
    </location>
</feature>
<feature type="compositionally biased region" description="Polar residues" evidence="2">
    <location>
        <begin position="252"/>
        <end position="262"/>
    </location>
</feature>
<feature type="compositionally biased region" description="Basic and acidic residues" evidence="2">
    <location>
        <begin position="351"/>
        <end position="393"/>
    </location>
</feature>
<feature type="compositionally biased region" description="Basic residues" evidence="2">
    <location>
        <begin position="399"/>
        <end position="412"/>
    </location>
</feature>
<feature type="glycosylation site" description="N-linked (GlcNAc...) asparagine" evidence="1">
    <location>
        <position position="111"/>
    </location>
</feature>
<sequence>MRLRFWLLIWLLLGFISHQPTPVINSLAVYRHRETDFGVGVRDHPGQHGKTPSPQKLDNLIIIIIGFLRRDTFTILFCTSYLCVSFLKTIFWSRNGHDGSTDVQQRAWRSNRSRQKGLRSICMHTKKRVSSFRGNKIGLKDVITLRRHVETKVRAKIRKRKVTTKINRHDKINGKRKTARKQKMFQRAQELRRRAEDYHKCKIPPSARKPLCNWVRMAAAEHRHSSGLPCWPYLTAEALKNRMGRQPPPPTQQHSITDNSLSLKTPPECLLHPLPPSVDDNIKECPLAPLPPSVDDNLKEYLLVPLPPSPLPPSVDDNLKDCLFVPLPPSPLPPSVDDNLKTPPLATQEAEAEKPPKPKRWRVDEVEQSPKPKRRRADEVEQSPKPKRQREAEAQQLPKPKRRRLSKLRTRHCTQAWAIRINPWVEKKKKIKKQNKTHAPKTN</sequence>
<keyword id="KW-0325">Glycoprotein</keyword>
<keyword id="KW-1267">Proteomics identification</keyword>
<keyword id="KW-1185">Reference proteome</keyword>
<keyword id="KW-0964">Secreted</keyword>
<keyword id="KW-0732">Signal</keyword>
<accession>A6NHN6</accession>
<accession>C9J9U8</accession>
<dbReference type="EMBL" id="AC009053">
    <property type="status" value="NOT_ANNOTATED_CDS"/>
    <property type="molecule type" value="Genomic_DNA"/>
</dbReference>
<dbReference type="CCDS" id="CCDS76897.1"/>
<dbReference type="RefSeq" id="NP_001293023.1">
    <property type="nucleotide sequence ID" value="NM_001306094.2"/>
</dbReference>
<dbReference type="RefSeq" id="XP_011521800.1">
    <property type="nucleotide sequence ID" value="XM_011523498.2"/>
</dbReference>
<dbReference type="RefSeq" id="XP_016878737.1">
    <property type="nucleotide sequence ID" value="XM_017023248.1"/>
</dbReference>
<dbReference type="RefSeq" id="XP_054236359.1">
    <property type="nucleotide sequence ID" value="XM_054380384.1"/>
</dbReference>
<dbReference type="FunCoup" id="A6NHN6">
    <property type="interactions" value="19"/>
</dbReference>
<dbReference type="IntAct" id="A6NHN6">
    <property type="interactions" value="1"/>
</dbReference>
<dbReference type="STRING" id="9606.ENSP00000411140"/>
<dbReference type="GlyCosmos" id="A6NHN6">
    <property type="glycosylation" value="1 site, No reported glycans"/>
</dbReference>
<dbReference type="GlyGen" id="A6NHN6">
    <property type="glycosylation" value="2 sites"/>
</dbReference>
<dbReference type="iPTMnet" id="A6NHN6"/>
<dbReference type="PhosphoSitePlus" id="A6NHN6"/>
<dbReference type="BioMuta" id="NPIPB15"/>
<dbReference type="MassIVE" id="A6NHN6"/>
<dbReference type="PaxDb" id="9606-ENSP00000411140"/>
<dbReference type="PeptideAtlas" id="A6NHN6"/>
<dbReference type="ProteomicsDB" id="1211"/>
<dbReference type="ProteomicsDB" id="9228"/>
<dbReference type="Antibodypedia" id="71489">
    <property type="antibodies" value="22 antibodies from 11 providers"/>
</dbReference>
<dbReference type="DNASU" id="440348"/>
<dbReference type="Ensembl" id="ENST00000429990.1">
    <property type="protein sequence ID" value="ENSP00000411140.1"/>
    <property type="gene ID" value="ENSG00000196436.9"/>
</dbReference>
<dbReference type="Ensembl" id="ENST00000692376.1">
    <property type="protein sequence ID" value="ENSP00000508772.1"/>
    <property type="gene ID" value="ENSG00000196436.9"/>
</dbReference>
<dbReference type="GeneID" id="440348"/>
<dbReference type="KEGG" id="hsa:440348"/>
<dbReference type="MANE-Select" id="ENST00000692376.1">
    <property type="protein sequence ID" value="ENSP00000508772.1"/>
    <property type="RefSeq nucleotide sequence ID" value="NM_001306094.2"/>
    <property type="RefSeq protein sequence ID" value="NP_001293023.1"/>
</dbReference>
<dbReference type="UCSC" id="uc059xbq.1">
    <property type="organism name" value="human"/>
</dbReference>
<dbReference type="AGR" id="HGNC:34409"/>
<dbReference type="CTD" id="440348"/>
<dbReference type="DisGeNET" id="440348"/>
<dbReference type="GeneCards" id="NPIPB15"/>
<dbReference type="HGNC" id="HGNC:34409">
    <property type="gene designation" value="NPIPB15"/>
</dbReference>
<dbReference type="HPA" id="ENSG00000196436">
    <property type="expression patterns" value="Tissue enhanced (testis)"/>
</dbReference>
<dbReference type="neXtProt" id="NX_A6NHN6"/>
<dbReference type="VEuPathDB" id="HostDB:ENSG00000196436"/>
<dbReference type="eggNOG" id="ENOG502TDBV">
    <property type="taxonomic scope" value="Eukaryota"/>
</dbReference>
<dbReference type="GeneTree" id="ENSGT00540000072033"/>
<dbReference type="HOGENOM" id="CLU_059939_0_0_1"/>
<dbReference type="InParanoid" id="A6NHN6"/>
<dbReference type="OMA" id="PWVEKKK"/>
<dbReference type="OrthoDB" id="9536178at2759"/>
<dbReference type="PAN-GO" id="A6NHN6">
    <property type="GO annotations" value="1 GO annotation based on evolutionary models"/>
</dbReference>
<dbReference type="PhylomeDB" id="A6NHN6"/>
<dbReference type="TreeFam" id="TF333389"/>
<dbReference type="PathwayCommons" id="A6NHN6"/>
<dbReference type="SignaLink" id="A6NHN6"/>
<dbReference type="BioGRID-ORCS" id="440348">
    <property type="hits" value="9 hits in 74 CRISPR screens"/>
</dbReference>
<dbReference type="ChiTaRS" id="NPIPB15">
    <property type="organism name" value="human"/>
</dbReference>
<dbReference type="GenomeRNAi" id="440348"/>
<dbReference type="Pharos" id="A6NHN6">
    <property type="development level" value="Tdark"/>
</dbReference>
<dbReference type="PRO" id="PR:A6NHN6"/>
<dbReference type="Proteomes" id="UP000005640">
    <property type="component" value="Chromosome 16"/>
</dbReference>
<dbReference type="RNAct" id="A6NHN6">
    <property type="molecule type" value="protein"/>
</dbReference>
<dbReference type="Bgee" id="ENSG00000196436">
    <property type="expression patterns" value="Expressed in right testis and 103 other cell types or tissues"/>
</dbReference>
<dbReference type="GO" id="GO:0005576">
    <property type="term" value="C:extracellular region"/>
    <property type="evidence" value="ECO:0007669"/>
    <property type="project" value="UniProtKB-SubCell"/>
</dbReference>
<dbReference type="InterPro" id="IPR009443">
    <property type="entry name" value="NPIP"/>
</dbReference>
<dbReference type="InterPro" id="IPR054697">
    <property type="entry name" value="NPIP_N"/>
</dbReference>
<dbReference type="PANTHER" id="PTHR15438">
    <property type="entry name" value="NUCLEAR PORE COMPLEX INTERACTING PROTEIN"/>
    <property type="match status" value="1"/>
</dbReference>
<dbReference type="PANTHER" id="PTHR15438:SF4">
    <property type="entry name" value="NUCLEAR PORE COMPLEX-INTERACTING PROTEIN FAMILY MEMBER B15-RELATED"/>
    <property type="match status" value="1"/>
</dbReference>
<dbReference type="Pfam" id="PF06409">
    <property type="entry name" value="NPIP"/>
    <property type="match status" value="1"/>
</dbReference>
<proteinExistence type="evidence at protein level"/>
<reference key="1">
    <citation type="journal article" date="2004" name="Nature">
        <title>The sequence and analysis of duplication-rich human chromosome 16.</title>
        <authorList>
            <person name="Martin J."/>
            <person name="Han C."/>
            <person name="Gordon L.A."/>
            <person name="Terry A."/>
            <person name="Prabhakar S."/>
            <person name="She X."/>
            <person name="Xie G."/>
            <person name="Hellsten U."/>
            <person name="Chan Y.M."/>
            <person name="Altherr M."/>
            <person name="Couronne O."/>
            <person name="Aerts A."/>
            <person name="Bajorek E."/>
            <person name="Black S."/>
            <person name="Blumer H."/>
            <person name="Branscomb E."/>
            <person name="Brown N.C."/>
            <person name="Bruno W.J."/>
            <person name="Buckingham J.M."/>
            <person name="Callen D.F."/>
            <person name="Campbell C.S."/>
            <person name="Campbell M.L."/>
            <person name="Campbell E.W."/>
            <person name="Caoile C."/>
            <person name="Challacombe J.F."/>
            <person name="Chasteen L.A."/>
            <person name="Chertkov O."/>
            <person name="Chi H.C."/>
            <person name="Christensen M."/>
            <person name="Clark L.M."/>
            <person name="Cohn J.D."/>
            <person name="Denys M."/>
            <person name="Detter J.C."/>
            <person name="Dickson M."/>
            <person name="Dimitrijevic-Bussod M."/>
            <person name="Escobar J."/>
            <person name="Fawcett J.J."/>
            <person name="Flowers D."/>
            <person name="Fotopulos D."/>
            <person name="Glavina T."/>
            <person name="Gomez M."/>
            <person name="Gonzales E."/>
            <person name="Goodstein D."/>
            <person name="Goodwin L.A."/>
            <person name="Grady D.L."/>
            <person name="Grigoriev I."/>
            <person name="Groza M."/>
            <person name="Hammon N."/>
            <person name="Hawkins T."/>
            <person name="Haydu L."/>
            <person name="Hildebrand C.E."/>
            <person name="Huang W."/>
            <person name="Israni S."/>
            <person name="Jett J."/>
            <person name="Jewett P.B."/>
            <person name="Kadner K."/>
            <person name="Kimball H."/>
            <person name="Kobayashi A."/>
            <person name="Krawczyk M.-C."/>
            <person name="Leyba T."/>
            <person name="Longmire J.L."/>
            <person name="Lopez F."/>
            <person name="Lou Y."/>
            <person name="Lowry S."/>
            <person name="Ludeman T."/>
            <person name="Manohar C.F."/>
            <person name="Mark G.A."/>
            <person name="McMurray K.L."/>
            <person name="Meincke L.J."/>
            <person name="Morgan J."/>
            <person name="Moyzis R.K."/>
            <person name="Mundt M.O."/>
            <person name="Munk A.C."/>
            <person name="Nandkeshwar R.D."/>
            <person name="Pitluck S."/>
            <person name="Pollard M."/>
            <person name="Predki P."/>
            <person name="Parson-Quintana B."/>
            <person name="Ramirez L."/>
            <person name="Rash S."/>
            <person name="Retterer J."/>
            <person name="Ricke D.O."/>
            <person name="Robinson D.L."/>
            <person name="Rodriguez A."/>
            <person name="Salamov A."/>
            <person name="Saunders E.H."/>
            <person name="Scott D."/>
            <person name="Shough T."/>
            <person name="Stallings R.L."/>
            <person name="Stalvey M."/>
            <person name="Sutherland R.D."/>
            <person name="Tapia R."/>
            <person name="Tesmer J.G."/>
            <person name="Thayer N."/>
            <person name="Thompson L.S."/>
            <person name="Tice H."/>
            <person name="Torney D.C."/>
            <person name="Tran-Gyamfi M."/>
            <person name="Tsai M."/>
            <person name="Ulanovsky L.E."/>
            <person name="Ustaszewska A."/>
            <person name="Vo N."/>
            <person name="White P.S."/>
            <person name="Williams A.L."/>
            <person name="Wills P.L."/>
            <person name="Wu J.-R."/>
            <person name="Wu K."/>
            <person name="Yang J."/>
            <person name="DeJong P."/>
            <person name="Bruce D."/>
            <person name="Doggett N.A."/>
            <person name="Deaven L."/>
            <person name="Schmutz J."/>
            <person name="Grimwood J."/>
            <person name="Richardson P."/>
            <person name="Rokhsar D.S."/>
            <person name="Eichler E.E."/>
            <person name="Gilna P."/>
            <person name="Lucas S.M."/>
            <person name="Myers R.M."/>
            <person name="Rubin E.M."/>
            <person name="Pennacchio L.A."/>
        </authorList>
    </citation>
    <scope>NUCLEOTIDE SEQUENCE [LARGE SCALE GENOMIC DNA]</scope>
</reference>
<protein>
    <recommendedName>
        <fullName>Nuclear pore complex-interacting protein family member B15</fullName>
    </recommendedName>
    <alternativeName>
        <fullName>Nuclear pore complex-interacting protein-like 2</fullName>
    </alternativeName>
</protein>
<name>NPB15_HUMAN</name>